<accession>P04084</accession>
<protein>
    <recommendedName>
        <fullName>Acidic phospholipase A2 homolog vipoxin A chain</fullName>
        <shortName>svPLA2 homolog</shortName>
    </recommendedName>
    <alternativeName>
        <fullName>Acidic phospholipase A2 inhibitor vipoxin A chain</fullName>
    </alternativeName>
    <alternativeName>
        <fullName>Vipoxin acidic component</fullName>
        <shortName>VAC</shortName>
    </alternativeName>
    <alternativeName>
        <fullName>Vipoxin non-toxic component</fullName>
    </alternativeName>
</protein>
<feature type="chain" id="PRO_0000161713" description="Acidic phospholipase A2 homolog vipoxin A chain">
    <location>
        <begin position="1"/>
        <end position="122"/>
    </location>
</feature>
<feature type="disulfide bond" evidence="1 4 7 8">
    <location>
        <begin position="26"/>
        <end position="115"/>
    </location>
</feature>
<feature type="disulfide bond" evidence="1 4 7 8">
    <location>
        <begin position="28"/>
        <end position="44"/>
    </location>
</feature>
<feature type="disulfide bond" evidence="1 4 7 8">
    <location>
        <begin position="43"/>
        <end position="95"/>
    </location>
</feature>
<feature type="disulfide bond" evidence="1 4 7 8">
    <location>
        <begin position="49"/>
        <end position="122"/>
    </location>
</feature>
<feature type="disulfide bond" evidence="1 4 7 8">
    <location>
        <begin position="50"/>
        <end position="88"/>
    </location>
</feature>
<feature type="disulfide bond" evidence="1 4 7 8">
    <location>
        <begin position="57"/>
        <end position="81"/>
    </location>
</feature>
<feature type="disulfide bond" evidence="1 4 7 8">
    <location>
        <begin position="75"/>
        <end position="86"/>
    </location>
</feature>
<feature type="helix" evidence="9">
    <location>
        <begin position="2"/>
        <end position="13"/>
    </location>
</feature>
<feature type="helix" evidence="9">
    <location>
        <begin position="17"/>
        <end position="19"/>
    </location>
</feature>
<feature type="helix" evidence="9">
    <location>
        <begin position="21"/>
        <end position="23"/>
    </location>
</feature>
<feature type="turn" evidence="9">
    <location>
        <begin position="25"/>
        <end position="28"/>
    </location>
</feature>
<feature type="strand" evidence="10">
    <location>
        <begin position="32"/>
        <end position="34"/>
    </location>
</feature>
<feature type="helix" evidence="9">
    <location>
        <begin position="39"/>
        <end position="52"/>
    </location>
</feature>
<feature type="strand" evidence="10">
    <location>
        <begin position="54"/>
        <end position="56"/>
    </location>
</feature>
<feature type="turn" evidence="9">
    <location>
        <begin position="59"/>
        <end position="61"/>
    </location>
</feature>
<feature type="strand" evidence="9">
    <location>
        <begin position="66"/>
        <end position="69"/>
    </location>
</feature>
<feature type="strand" evidence="9">
    <location>
        <begin position="72"/>
        <end position="75"/>
    </location>
</feature>
<feature type="helix" evidence="9">
    <location>
        <begin position="80"/>
        <end position="98"/>
    </location>
</feature>
<feature type="helix" evidence="9">
    <location>
        <begin position="99"/>
        <end position="102"/>
    </location>
</feature>
<feature type="helix" evidence="9">
    <location>
        <begin position="105"/>
        <end position="107"/>
    </location>
</feature>
<feature type="helix" evidence="9">
    <location>
        <begin position="111"/>
        <end position="113"/>
    </location>
</feature>
<evidence type="ECO:0000269" key="1">
    <source>
    </source>
</evidence>
<evidence type="ECO:0000269" key="2">
    <source>
    </source>
</evidence>
<evidence type="ECO:0000269" key="3">
    <source>
    </source>
</evidence>
<evidence type="ECO:0000269" key="4">
    <source>
    </source>
</evidence>
<evidence type="ECO:0000305" key="5"/>
<evidence type="ECO:0000305" key="6">
    <source>
    </source>
</evidence>
<evidence type="ECO:0007744" key="7">
    <source>
        <dbReference type="PDB" id="1AOK"/>
    </source>
</evidence>
<evidence type="ECO:0007744" key="8">
    <source>
        <dbReference type="PDB" id="1JLT"/>
    </source>
</evidence>
<evidence type="ECO:0007829" key="9">
    <source>
        <dbReference type="PDB" id="1JLT"/>
    </source>
</evidence>
<evidence type="ECO:0007829" key="10">
    <source>
        <dbReference type="PDB" id="1Q5T"/>
    </source>
</evidence>
<comment type="function">
    <text evidence="3">Heterodimer: postsynaptic neurotoxin.</text>
</comment>
<comment type="function">
    <text evidence="3">Monomer: Acidic phospholipase A2 homolog that is non-toxic.</text>
</comment>
<comment type="subunit">
    <text evidence="1 2 3 4">Heterodimer of A and B (AC P14420) chains; non-covalently linked. The A chain (acidic) is non-toxic, and increases the toxicity of the B chain (basic). The A chain may act as factor stabilizing the complex structure and hence retaining its toxicity by preventing non-specific binding. Upon binding to the target membranes the A chain may dissociate.</text>
</comment>
<comment type="subcellular location">
    <subcellularLocation>
        <location>Secreted</location>
    </subcellularLocation>
</comment>
<comment type="tissue specificity">
    <text>Expressed by the venom gland.</text>
</comment>
<comment type="toxic dose">
    <text evidence="3">Heterodimer: LD(50) is 0.7-1.2 mg/kg by intraperitoneal injection into mice and 0.9-1.3 mg/kg by intravenous injection into mice.</text>
</comment>
<comment type="toxic dose">
    <text evidence="3">Heterodimer: LD(50) is 0.9-1.3 mg/kg by intravenous injection into mice.</text>
</comment>
<comment type="toxic dose">
    <text evidence="3">Monomer: LD(50) is &gt;30 mg/kg by intraperitoneal injection into mice.</text>
</comment>
<comment type="similarity">
    <text evidence="5">Belongs to the phospholipase A2 family. Group II subfamily. D49 sub-subfamily.</text>
</comment>
<comment type="caution">
    <text evidence="5">In contrast to other phospholipases, it lacks the typical His active site (His-&gt;Gln in position 47).</text>
</comment>
<comment type="caution">
    <text evidence="6">The acidic chain was originally postulated to act as an inhibitor of the basic chain.</text>
</comment>
<organism>
    <name type="scientific">Vipera ammodytes meridionalis</name>
    <name type="common">Eastern sand viper</name>
    <dbReference type="NCBI Taxonomy" id="73841"/>
    <lineage>
        <taxon>Eukaryota</taxon>
        <taxon>Metazoa</taxon>
        <taxon>Chordata</taxon>
        <taxon>Craniata</taxon>
        <taxon>Vertebrata</taxon>
        <taxon>Euteleostomi</taxon>
        <taxon>Lepidosauria</taxon>
        <taxon>Squamata</taxon>
        <taxon>Bifurcata</taxon>
        <taxon>Unidentata</taxon>
        <taxon>Episquamata</taxon>
        <taxon>Toxicofera</taxon>
        <taxon>Serpentes</taxon>
        <taxon>Colubroidea</taxon>
        <taxon>Viperidae</taxon>
        <taxon>Viperinae</taxon>
        <taxon>Vipera</taxon>
    </lineage>
</organism>
<dbReference type="PIR" id="B29290">
    <property type="entry name" value="PSVII"/>
</dbReference>
<dbReference type="PDB" id="1AOK">
    <property type="method" value="X-ray"/>
    <property type="resolution" value="2.00 A"/>
    <property type="chains" value="A=1-122"/>
</dbReference>
<dbReference type="PDB" id="1JLT">
    <property type="method" value="X-ray"/>
    <property type="resolution" value="1.40 A"/>
    <property type="chains" value="A=1-122"/>
</dbReference>
<dbReference type="PDB" id="1Q5T">
    <property type="method" value="X-ray"/>
    <property type="resolution" value="1.90 A"/>
    <property type="chains" value="A/B=1-122"/>
</dbReference>
<dbReference type="PDB" id="1VPI">
    <property type="method" value="X-ray"/>
    <property type="resolution" value="1.76 A"/>
    <property type="chains" value="A=1-122"/>
</dbReference>
<dbReference type="PDBsum" id="1AOK"/>
<dbReference type="PDBsum" id="1JLT"/>
<dbReference type="PDBsum" id="1Q5T"/>
<dbReference type="PDBsum" id="1VPI"/>
<dbReference type="SMR" id="P04084"/>
<dbReference type="MINT" id="P04084"/>
<dbReference type="EvolutionaryTrace" id="P04084"/>
<dbReference type="GO" id="GO:0005576">
    <property type="term" value="C:extracellular region"/>
    <property type="evidence" value="ECO:0007669"/>
    <property type="project" value="UniProtKB-SubCell"/>
</dbReference>
<dbReference type="GO" id="GO:0005509">
    <property type="term" value="F:calcium ion binding"/>
    <property type="evidence" value="ECO:0007669"/>
    <property type="project" value="InterPro"/>
</dbReference>
<dbReference type="GO" id="GO:0047498">
    <property type="term" value="F:calcium-dependent phospholipase A2 activity"/>
    <property type="evidence" value="ECO:0007669"/>
    <property type="project" value="TreeGrafter"/>
</dbReference>
<dbReference type="GO" id="GO:0005543">
    <property type="term" value="F:phospholipid binding"/>
    <property type="evidence" value="ECO:0007669"/>
    <property type="project" value="TreeGrafter"/>
</dbReference>
<dbReference type="GO" id="GO:0090729">
    <property type="term" value="F:toxin activity"/>
    <property type="evidence" value="ECO:0007669"/>
    <property type="project" value="UniProtKB-KW"/>
</dbReference>
<dbReference type="GO" id="GO:0050482">
    <property type="term" value="P:arachidonate secretion"/>
    <property type="evidence" value="ECO:0007669"/>
    <property type="project" value="InterPro"/>
</dbReference>
<dbReference type="GO" id="GO:0016042">
    <property type="term" value="P:lipid catabolic process"/>
    <property type="evidence" value="ECO:0007669"/>
    <property type="project" value="InterPro"/>
</dbReference>
<dbReference type="GO" id="GO:0042130">
    <property type="term" value="P:negative regulation of T cell proliferation"/>
    <property type="evidence" value="ECO:0007669"/>
    <property type="project" value="TreeGrafter"/>
</dbReference>
<dbReference type="GO" id="GO:0006644">
    <property type="term" value="P:phospholipid metabolic process"/>
    <property type="evidence" value="ECO:0007669"/>
    <property type="project" value="InterPro"/>
</dbReference>
<dbReference type="CDD" id="cd00125">
    <property type="entry name" value="PLA2c"/>
    <property type="match status" value="1"/>
</dbReference>
<dbReference type="FunFam" id="1.20.90.10:FF:000001">
    <property type="entry name" value="Basic phospholipase A2 homolog"/>
    <property type="match status" value="1"/>
</dbReference>
<dbReference type="Gene3D" id="1.20.90.10">
    <property type="entry name" value="Phospholipase A2 domain"/>
    <property type="match status" value="1"/>
</dbReference>
<dbReference type="InterPro" id="IPR001211">
    <property type="entry name" value="PLipase_A2"/>
</dbReference>
<dbReference type="InterPro" id="IPR033112">
    <property type="entry name" value="PLipase_A2_Asp_AS"/>
</dbReference>
<dbReference type="InterPro" id="IPR016090">
    <property type="entry name" value="PLipase_A2_dom"/>
</dbReference>
<dbReference type="InterPro" id="IPR036444">
    <property type="entry name" value="PLipase_A2_dom_sf"/>
</dbReference>
<dbReference type="PANTHER" id="PTHR11716">
    <property type="entry name" value="PHOSPHOLIPASE A2 FAMILY MEMBER"/>
    <property type="match status" value="1"/>
</dbReference>
<dbReference type="PANTHER" id="PTHR11716:SF9">
    <property type="entry name" value="PHOSPHOLIPASE A2, MEMBRANE ASSOCIATED"/>
    <property type="match status" value="1"/>
</dbReference>
<dbReference type="Pfam" id="PF00068">
    <property type="entry name" value="Phospholip_A2_1"/>
    <property type="match status" value="1"/>
</dbReference>
<dbReference type="PRINTS" id="PR00389">
    <property type="entry name" value="PHPHLIPASEA2"/>
</dbReference>
<dbReference type="SMART" id="SM00085">
    <property type="entry name" value="PA2c"/>
    <property type="match status" value="1"/>
</dbReference>
<dbReference type="SUPFAM" id="SSF48619">
    <property type="entry name" value="Phospholipase A2, PLA2"/>
    <property type="match status" value="1"/>
</dbReference>
<dbReference type="PROSITE" id="PS00119">
    <property type="entry name" value="PA2_ASP"/>
    <property type="match status" value="1"/>
</dbReference>
<sequence length="122" mass="13639">NLFQFGDMILQKTGKEAVHSYAIYGCYCGWGGQGRAQDATDRCCFAQDCCYGRVNDCNPKTATYTYSFENGDIVCGDNDLCLRAVCECDRAAAICLGENVNTYDKNYEYYSISHCTEESEQC</sequence>
<keyword id="KW-0002">3D-structure</keyword>
<keyword id="KW-0903">Direct protein sequencing</keyword>
<keyword id="KW-1015">Disulfide bond</keyword>
<keyword id="KW-0528">Neurotoxin</keyword>
<keyword id="KW-0629">Postsynaptic neurotoxin</keyword>
<keyword id="KW-0964">Secreted</keyword>
<keyword id="KW-0800">Toxin</keyword>
<reference key="1">
    <citation type="journal article" date="1984" name="Hoppe-Seyler's Z. Physiol. Chem.">
        <title>Sequence homology between phospholipase and its inhibitor in snake venom. The primary structure of the inhibitor of vipoxin from the venom of the Bulgarian viper (Vipera ammodytes ammodytes, Serpentes).</title>
        <authorList>
            <person name="Mancheva I."/>
            <person name="Kleinschmidt T."/>
            <person name="Aleksiev B."/>
            <person name="Braunitzer G."/>
        </authorList>
    </citation>
    <scope>PROTEIN SEQUENCE</scope>
    <source>
        <strain>Bulgarian</strain>
        <tissue>Venom</tissue>
    </source>
</reference>
<reference key="2">
    <citation type="journal article" date="2012" name="Interdiscip. Toxicol.">
        <title>Acute toxicity of vipoxin and its components: is the acidic component an 'inhibitor' of PLA2 toxicity?</title>
        <authorList>
            <person name="Atanasov V.N."/>
            <person name="Stoykova S."/>
            <person name="Goranova Y."/>
            <person name="Mitewa M."/>
            <person name="Petrova S."/>
        </authorList>
    </citation>
    <scope>FUNCTION</scope>
    <scope>SUBUNIT</scope>
    <scope>LETHAL DOSES</scope>
</reference>
<reference key="3">
    <citation type="journal article" date="1993" name="J. Mol. Biol.">
        <title>Crystallization and preliminary X-ray analysis of vipoxin, a complex between a toxic phospholipase A2 and its natural polypeptide inhibitor.</title>
        <authorList>
            <person name="Betzel C."/>
            <person name="Visanji M."/>
            <person name="Wilson K.S."/>
            <person name="Genov N."/>
            <person name="Mancheva I."/>
            <person name="Aleksiev B."/>
            <person name="Singh T.P."/>
        </authorList>
    </citation>
    <scope>X-RAY CRYSTALLOGRAPHY (1.8 ANGSTROMS)</scope>
    <source>
        <tissue>Venom</tissue>
    </source>
</reference>
<reference key="4">
    <citation type="journal article" date="1997" name="FEBS Lett.">
        <title>Crystal structure of vipoxin at 2.0 A: an example of regulation of a toxic function generated by molecular evolution.</title>
        <authorList>
            <person name="Perbandt M."/>
            <person name="Wilson J.C."/>
            <person name="Eschenburg S."/>
            <person name="Mancheva I."/>
            <person name="Aleksiev B."/>
            <person name="Genov N."/>
            <person name="Willingmann P."/>
            <person name="Weber W."/>
            <person name="Singh T.P."/>
            <person name="Betzel C."/>
        </authorList>
    </citation>
    <scope>X-RAY CRYSTALLOGRAPHY (2.0 ANGSTROMS) IN COMPLEX WITH VIPOXIN B CHAIN</scope>
    <scope>DISULFIDE BONDS</scope>
</reference>
<reference key="5">
    <citation type="journal article" date="1997" name="J. Mol. Biol.">
        <title>X-ray structure at 1.76-A resolution of a polypeptide phospholipase A2 inhibitor.</title>
        <authorList>
            <person name="Devedjiev Y."/>
            <person name="Popov A."/>
            <person name="Atanasov B."/>
            <person name="Bartunik H.-D."/>
        </authorList>
    </citation>
    <scope>X-RAY CRYSTALLOGRAPHY (1.76 ANGSTROMS)</scope>
    <scope>SEQUENCE REVISION TO 34</scope>
    <source>
        <tissue>Venom</tissue>
    </source>
</reference>
<reference key="6">
    <citation type="journal article" date="2001" name="Acta Crystallogr. D">
        <title>Structure of the neurotoxic complex vipoxin at 1.4 A resolution.</title>
        <authorList>
            <person name="Banumathi S."/>
            <person name="Rajashankar K.R."/>
            <person name="Notzel C."/>
            <person name="Aleksiev B."/>
            <person name="Singh T.P."/>
            <person name="Genov N."/>
            <person name="Betzel C."/>
        </authorList>
    </citation>
    <scope>X-RAY CRYSTALLOGRAPHY (1.4 ANGSTROMS) IN COMPLEX WITH VIPOXIN B CHAIN</scope>
    <scope>DISULFIDE BONDS</scope>
</reference>
<reference key="7">
    <citation type="journal article" date="2004" name="Biochem. Biophys. Res. Commun.">
        <title>The X-ray structure of a snake venom Gln48 phospholipase A2 at 1.9A resolution reveals anion-binding sites.</title>
        <authorList>
            <person name="Georgieva D.N."/>
            <person name="Perbandt M."/>
            <person name="Rypniewski W."/>
            <person name="Hristov K."/>
            <person name="Genov N."/>
            <person name="Betzel C."/>
        </authorList>
    </citation>
    <scope>X-RAY CRYSTALLOGRAPHY (1.9 ANGSTROMS) OF HOMODIMER IN COMPLEX WITH SULFATE IONS WHICH MIMIC THE TARGET MEMBRANE</scope>
    <scope>DISULFIDE BONDS</scope>
    <source>
        <tissue>Venom</tissue>
    </source>
</reference>
<proteinExistence type="evidence at protein level"/>
<name>PA2HA_VIPAE</name>